<protein>
    <recommendedName>
        <fullName evidence="1">ATP-dependent Clp protease ATP-binding subunit ClpX</fullName>
    </recommendedName>
</protein>
<reference key="1">
    <citation type="submission" date="2005-08" db="EMBL/GenBank/DDBJ databases">
        <title>Complete sequence of Pelodictyon luteolum DSM 273.</title>
        <authorList>
            <consortium name="US DOE Joint Genome Institute"/>
            <person name="Copeland A."/>
            <person name="Lucas S."/>
            <person name="Lapidus A."/>
            <person name="Barry K."/>
            <person name="Detter J.C."/>
            <person name="Glavina T."/>
            <person name="Hammon N."/>
            <person name="Israni S."/>
            <person name="Pitluck S."/>
            <person name="Bryant D."/>
            <person name="Schmutz J."/>
            <person name="Larimer F."/>
            <person name="Land M."/>
            <person name="Kyrpides N."/>
            <person name="Ivanova N."/>
            <person name="Richardson P."/>
        </authorList>
    </citation>
    <scope>NUCLEOTIDE SEQUENCE [LARGE SCALE GENOMIC DNA]</scope>
    <source>
        <strain>DSM 273 / BCRC 81028 / 2530</strain>
    </source>
</reference>
<gene>
    <name evidence="1" type="primary">clpX</name>
    <name type="ordered locus">Plut_0505</name>
</gene>
<organism>
    <name type="scientific">Chlorobium luteolum (strain DSM 273 / BCRC 81028 / 2530)</name>
    <name type="common">Pelodictyon luteolum</name>
    <dbReference type="NCBI Taxonomy" id="319225"/>
    <lineage>
        <taxon>Bacteria</taxon>
        <taxon>Pseudomonadati</taxon>
        <taxon>Chlorobiota</taxon>
        <taxon>Chlorobiia</taxon>
        <taxon>Chlorobiales</taxon>
        <taxon>Chlorobiaceae</taxon>
        <taxon>Chlorobium/Pelodictyon group</taxon>
        <taxon>Pelodictyon</taxon>
    </lineage>
</organism>
<dbReference type="EMBL" id="CP000096">
    <property type="protein sequence ID" value="ABB23393.1"/>
    <property type="molecule type" value="Genomic_DNA"/>
</dbReference>
<dbReference type="RefSeq" id="WP_011357268.1">
    <property type="nucleotide sequence ID" value="NC_007512.1"/>
</dbReference>
<dbReference type="SMR" id="Q3B5I8"/>
<dbReference type="STRING" id="319225.Plut_0505"/>
<dbReference type="KEGG" id="plt:Plut_0505"/>
<dbReference type="eggNOG" id="COG1219">
    <property type="taxonomic scope" value="Bacteria"/>
</dbReference>
<dbReference type="HOGENOM" id="CLU_014218_8_2_10"/>
<dbReference type="OrthoDB" id="9804062at2"/>
<dbReference type="Proteomes" id="UP000002709">
    <property type="component" value="Chromosome"/>
</dbReference>
<dbReference type="GO" id="GO:0009376">
    <property type="term" value="C:HslUV protease complex"/>
    <property type="evidence" value="ECO:0007669"/>
    <property type="project" value="TreeGrafter"/>
</dbReference>
<dbReference type="GO" id="GO:0005524">
    <property type="term" value="F:ATP binding"/>
    <property type="evidence" value="ECO:0007669"/>
    <property type="project" value="UniProtKB-UniRule"/>
</dbReference>
<dbReference type="GO" id="GO:0016887">
    <property type="term" value="F:ATP hydrolysis activity"/>
    <property type="evidence" value="ECO:0007669"/>
    <property type="project" value="InterPro"/>
</dbReference>
<dbReference type="GO" id="GO:0140662">
    <property type="term" value="F:ATP-dependent protein folding chaperone"/>
    <property type="evidence" value="ECO:0007669"/>
    <property type="project" value="InterPro"/>
</dbReference>
<dbReference type="GO" id="GO:0046983">
    <property type="term" value="F:protein dimerization activity"/>
    <property type="evidence" value="ECO:0007669"/>
    <property type="project" value="InterPro"/>
</dbReference>
<dbReference type="GO" id="GO:0051082">
    <property type="term" value="F:unfolded protein binding"/>
    <property type="evidence" value="ECO:0007669"/>
    <property type="project" value="UniProtKB-UniRule"/>
</dbReference>
<dbReference type="GO" id="GO:0008270">
    <property type="term" value="F:zinc ion binding"/>
    <property type="evidence" value="ECO:0007669"/>
    <property type="project" value="InterPro"/>
</dbReference>
<dbReference type="GO" id="GO:0051301">
    <property type="term" value="P:cell division"/>
    <property type="evidence" value="ECO:0007669"/>
    <property type="project" value="TreeGrafter"/>
</dbReference>
<dbReference type="GO" id="GO:0051603">
    <property type="term" value="P:proteolysis involved in protein catabolic process"/>
    <property type="evidence" value="ECO:0007669"/>
    <property type="project" value="TreeGrafter"/>
</dbReference>
<dbReference type="CDD" id="cd19497">
    <property type="entry name" value="RecA-like_ClpX"/>
    <property type="match status" value="1"/>
</dbReference>
<dbReference type="FunFam" id="1.10.8.60:FF:000002">
    <property type="entry name" value="ATP-dependent Clp protease ATP-binding subunit ClpX"/>
    <property type="match status" value="1"/>
</dbReference>
<dbReference type="Gene3D" id="1.10.8.60">
    <property type="match status" value="1"/>
</dbReference>
<dbReference type="Gene3D" id="6.20.220.10">
    <property type="entry name" value="ClpX chaperone, C4-type zinc finger domain"/>
    <property type="match status" value="1"/>
</dbReference>
<dbReference type="Gene3D" id="3.40.50.300">
    <property type="entry name" value="P-loop containing nucleotide triphosphate hydrolases"/>
    <property type="match status" value="1"/>
</dbReference>
<dbReference type="HAMAP" id="MF_00175">
    <property type="entry name" value="ClpX"/>
    <property type="match status" value="1"/>
</dbReference>
<dbReference type="InterPro" id="IPR003593">
    <property type="entry name" value="AAA+_ATPase"/>
</dbReference>
<dbReference type="InterPro" id="IPR050052">
    <property type="entry name" value="ATP-dep_Clp_protease_ClpX"/>
</dbReference>
<dbReference type="InterPro" id="IPR003959">
    <property type="entry name" value="ATPase_AAA_core"/>
</dbReference>
<dbReference type="InterPro" id="IPR019489">
    <property type="entry name" value="Clp_ATPase_C"/>
</dbReference>
<dbReference type="InterPro" id="IPR004487">
    <property type="entry name" value="Clp_protease_ATP-bd_su_ClpX"/>
</dbReference>
<dbReference type="InterPro" id="IPR046425">
    <property type="entry name" value="ClpX_bact"/>
</dbReference>
<dbReference type="InterPro" id="IPR027417">
    <property type="entry name" value="P-loop_NTPase"/>
</dbReference>
<dbReference type="InterPro" id="IPR010603">
    <property type="entry name" value="Znf_CppX_C4"/>
</dbReference>
<dbReference type="InterPro" id="IPR038366">
    <property type="entry name" value="Znf_CppX_C4_sf"/>
</dbReference>
<dbReference type="NCBIfam" id="TIGR00382">
    <property type="entry name" value="clpX"/>
    <property type="match status" value="1"/>
</dbReference>
<dbReference type="NCBIfam" id="NF003745">
    <property type="entry name" value="PRK05342.1"/>
    <property type="match status" value="1"/>
</dbReference>
<dbReference type="PANTHER" id="PTHR48102:SF7">
    <property type="entry name" value="ATP-DEPENDENT CLP PROTEASE ATP-BINDING SUBUNIT CLPX-LIKE, MITOCHONDRIAL"/>
    <property type="match status" value="1"/>
</dbReference>
<dbReference type="PANTHER" id="PTHR48102">
    <property type="entry name" value="ATP-DEPENDENT CLP PROTEASE ATP-BINDING SUBUNIT CLPX-LIKE, MITOCHONDRIAL-RELATED"/>
    <property type="match status" value="1"/>
</dbReference>
<dbReference type="Pfam" id="PF07724">
    <property type="entry name" value="AAA_2"/>
    <property type="match status" value="1"/>
</dbReference>
<dbReference type="Pfam" id="PF10431">
    <property type="entry name" value="ClpB_D2-small"/>
    <property type="match status" value="1"/>
</dbReference>
<dbReference type="Pfam" id="PF06689">
    <property type="entry name" value="zf-C4_ClpX"/>
    <property type="match status" value="1"/>
</dbReference>
<dbReference type="SMART" id="SM00382">
    <property type="entry name" value="AAA"/>
    <property type="match status" value="1"/>
</dbReference>
<dbReference type="SMART" id="SM01086">
    <property type="entry name" value="ClpB_D2-small"/>
    <property type="match status" value="1"/>
</dbReference>
<dbReference type="SMART" id="SM00994">
    <property type="entry name" value="zf-C4_ClpX"/>
    <property type="match status" value="1"/>
</dbReference>
<dbReference type="SUPFAM" id="SSF57716">
    <property type="entry name" value="Glucocorticoid receptor-like (DNA-binding domain)"/>
    <property type="match status" value="1"/>
</dbReference>
<dbReference type="SUPFAM" id="SSF52540">
    <property type="entry name" value="P-loop containing nucleoside triphosphate hydrolases"/>
    <property type="match status" value="1"/>
</dbReference>
<dbReference type="PROSITE" id="PS51902">
    <property type="entry name" value="CLPX_ZB"/>
    <property type="match status" value="1"/>
</dbReference>
<proteinExistence type="inferred from homology"/>
<comment type="function">
    <text evidence="1">ATP-dependent specificity component of the Clp protease. It directs the protease to specific substrates. Can perform chaperone functions in the absence of ClpP.</text>
</comment>
<comment type="subunit">
    <text evidence="1">Component of the ClpX-ClpP complex. Forms a hexameric ring that, in the presence of ATP, binds to fourteen ClpP subunits assembled into a disk-like structure with a central cavity, resembling the structure of eukaryotic proteasomes.</text>
</comment>
<comment type="similarity">
    <text evidence="1">Belongs to the ClpX chaperone family.</text>
</comment>
<accession>Q3B5I8</accession>
<name>CLPX_CHLL3</name>
<keyword id="KW-0067">ATP-binding</keyword>
<keyword id="KW-0143">Chaperone</keyword>
<keyword id="KW-0479">Metal-binding</keyword>
<keyword id="KW-0547">Nucleotide-binding</keyword>
<keyword id="KW-1185">Reference proteome</keyword>
<keyword id="KW-0862">Zinc</keyword>
<evidence type="ECO:0000255" key="1">
    <source>
        <dbReference type="HAMAP-Rule" id="MF_00175"/>
    </source>
</evidence>
<evidence type="ECO:0000255" key="2">
    <source>
        <dbReference type="PROSITE-ProRule" id="PRU01250"/>
    </source>
</evidence>
<sequence>MTRERETAKGKTRNINRGGDGGEQVYCSFCGRSAQEVSSMVAGPMAFICDRCIKTSYDILRKELSAIQHPEVIAEQPFLPRLVSPKAILESLNQYVVGQERAKRSLAVAVYNHYKRIDSQEWRHDDDEIVIEKSNIMLIGPTGTGKTLLAQTLANLLEVPFSIVDATSLTEAGYVGDDVETILARLLHASDFNLERAERGIIYVDEIDKIARKSANVSITRDVSGEGVQQALLKILEGAVVGVPPKGGRKHPEQQLININTKNILFICGGAFEGLDRLIARRISKSSMGFGSSVTDKQSGYDPEILKHVTQDDLHEYGLIPEFIGRLPVLSTLDPLDADALRSILVEPKNALVKQYGKLFEMDGVELEFTPEALERVVAIAIERGTGARALRSVLENVMIDIMFELPTMKGVGKCIITEEVIDRKGEPIYLDGAGRKKKRA</sequence>
<feature type="chain" id="PRO_1000024608" description="ATP-dependent Clp protease ATP-binding subunit ClpX">
    <location>
        <begin position="1"/>
        <end position="441"/>
    </location>
</feature>
<feature type="domain" description="ClpX-type ZB" evidence="2">
    <location>
        <begin position="15"/>
        <end position="68"/>
    </location>
</feature>
<feature type="binding site" evidence="2">
    <location>
        <position position="27"/>
    </location>
    <ligand>
        <name>Zn(2+)</name>
        <dbReference type="ChEBI" id="CHEBI:29105"/>
    </ligand>
</feature>
<feature type="binding site" evidence="2">
    <location>
        <position position="30"/>
    </location>
    <ligand>
        <name>Zn(2+)</name>
        <dbReference type="ChEBI" id="CHEBI:29105"/>
    </ligand>
</feature>
<feature type="binding site" evidence="2">
    <location>
        <position position="49"/>
    </location>
    <ligand>
        <name>Zn(2+)</name>
        <dbReference type="ChEBI" id="CHEBI:29105"/>
    </ligand>
</feature>
<feature type="binding site" evidence="2">
    <location>
        <position position="52"/>
    </location>
    <ligand>
        <name>Zn(2+)</name>
        <dbReference type="ChEBI" id="CHEBI:29105"/>
    </ligand>
</feature>
<feature type="binding site" evidence="1">
    <location>
        <begin position="141"/>
        <end position="148"/>
    </location>
    <ligand>
        <name>ATP</name>
        <dbReference type="ChEBI" id="CHEBI:30616"/>
    </ligand>
</feature>